<feature type="transit peptide" description="Mitochondrion" evidence="2">
    <location>
        <begin position="1"/>
        <end position="27"/>
    </location>
</feature>
<feature type="chain" id="PRO_0000273173" description="Dimethyladenosine transferase 1, mitochondrial">
    <location>
        <begin position="28"/>
        <end position="345"/>
    </location>
</feature>
<feature type="binding site" evidence="5 9">
    <location>
        <position position="38"/>
    </location>
    <ligand>
        <name>S-adenosyl-L-methionine</name>
        <dbReference type="ChEBI" id="CHEBI:59789"/>
    </ligand>
</feature>
<feature type="binding site" evidence="1">
    <location>
        <position position="63"/>
    </location>
    <ligand>
        <name>S-adenosyl-L-methionine</name>
        <dbReference type="ChEBI" id="CHEBI:59789"/>
    </ligand>
</feature>
<feature type="binding site" evidence="5 9">
    <location>
        <position position="85"/>
    </location>
    <ligand>
        <name>S-adenosyl-L-methionine</name>
        <dbReference type="ChEBI" id="CHEBI:59789"/>
    </ligand>
</feature>
<feature type="binding site" evidence="5 9">
    <location>
        <position position="86"/>
    </location>
    <ligand>
        <name>S-adenosyl-L-methionine</name>
        <dbReference type="ChEBI" id="CHEBI:59789"/>
    </ligand>
</feature>
<feature type="binding site" evidence="5 9">
    <location>
        <position position="111"/>
    </location>
    <ligand>
        <name>S-adenosyl-L-methionine</name>
        <dbReference type="ChEBI" id="CHEBI:59789"/>
    </ligand>
</feature>
<feature type="binding site" evidence="5 9">
    <location>
        <position position="112"/>
    </location>
    <ligand>
        <name>S-adenosyl-L-methionine</name>
        <dbReference type="ChEBI" id="CHEBI:59789"/>
    </ligand>
</feature>
<feature type="binding site" evidence="1">
    <location>
        <position position="141"/>
    </location>
    <ligand>
        <name>S-adenosyl-L-methionine</name>
        <dbReference type="ChEBI" id="CHEBI:59789"/>
    </ligand>
</feature>
<feature type="helix" evidence="11">
    <location>
        <begin position="18"/>
        <end position="30"/>
    </location>
</feature>
<feature type="strand" evidence="11">
    <location>
        <begin position="31"/>
        <end position="33"/>
    </location>
</feature>
<feature type="helix" evidence="11">
    <location>
        <begin position="41"/>
        <end position="51"/>
    </location>
</feature>
<feature type="strand" evidence="11">
    <location>
        <begin position="58"/>
        <end position="62"/>
    </location>
</feature>
<feature type="turn" evidence="11">
    <location>
        <begin position="65"/>
        <end position="67"/>
    </location>
</feature>
<feature type="helix" evidence="11">
    <location>
        <begin position="68"/>
        <end position="74"/>
    </location>
</feature>
<feature type="turn" evidence="11">
    <location>
        <begin position="75"/>
        <end position="77"/>
    </location>
</feature>
<feature type="strand" evidence="11">
    <location>
        <begin position="79"/>
        <end position="84"/>
    </location>
</feature>
<feature type="helix" evidence="11">
    <location>
        <begin position="88"/>
        <end position="90"/>
    </location>
</feature>
<feature type="helix" evidence="11">
    <location>
        <begin position="91"/>
        <end position="100"/>
    </location>
</feature>
<feature type="turn" evidence="11">
    <location>
        <begin position="102"/>
        <end position="104"/>
    </location>
</feature>
<feature type="strand" evidence="11">
    <location>
        <begin position="105"/>
        <end position="108"/>
    </location>
</feature>
<feature type="turn" evidence="11">
    <location>
        <begin position="112"/>
        <end position="114"/>
    </location>
</feature>
<feature type="turn" evidence="11">
    <location>
        <begin position="118"/>
        <end position="120"/>
    </location>
</feature>
<feature type="helix" evidence="11">
    <location>
        <begin position="123"/>
        <end position="125"/>
    </location>
</feature>
<feature type="strand" evidence="11">
    <location>
        <begin position="135"/>
        <end position="140"/>
    </location>
</feature>
<feature type="helix" evidence="11">
    <location>
        <begin position="144"/>
        <end position="160"/>
    </location>
</feature>
<feature type="helix" evidence="11">
    <location>
        <begin position="163"/>
        <end position="167"/>
    </location>
</feature>
<feature type="strand" evidence="11">
    <location>
        <begin position="171"/>
        <end position="177"/>
    </location>
</feature>
<feature type="helix" evidence="11">
    <location>
        <begin position="178"/>
        <end position="185"/>
    </location>
</feature>
<feature type="helix" evidence="11">
    <location>
        <begin position="195"/>
        <end position="201"/>
    </location>
</feature>
<feature type="strand" evidence="11">
    <location>
        <begin position="204"/>
        <end position="212"/>
    </location>
</feature>
<feature type="helix" evidence="11">
    <location>
        <begin position="214"/>
        <end position="216"/>
    </location>
</feature>
<feature type="strand" evidence="11">
    <location>
        <begin position="217"/>
        <end position="219"/>
    </location>
</feature>
<feature type="strand" evidence="11">
    <location>
        <begin position="225"/>
        <end position="232"/>
    </location>
</feature>
<feature type="helix" evidence="11">
    <location>
        <begin position="242"/>
        <end position="253"/>
    </location>
</feature>
<feature type="helix" evidence="11">
    <location>
        <begin position="260"/>
        <end position="264"/>
    </location>
</feature>
<feature type="helix" evidence="11">
    <location>
        <begin position="265"/>
        <end position="267"/>
    </location>
</feature>
<feature type="helix" evidence="11">
    <location>
        <begin position="270"/>
        <end position="272"/>
    </location>
</feature>
<feature type="helix" evidence="11">
    <location>
        <begin position="273"/>
        <end position="284"/>
    </location>
</feature>
<feature type="helix" evidence="11">
    <location>
        <begin position="292"/>
        <end position="294"/>
    </location>
</feature>
<feature type="helix" evidence="11">
    <location>
        <begin position="297"/>
        <end position="313"/>
    </location>
</feature>
<feature type="helix" evidence="11">
    <location>
        <begin position="317"/>
        <end position="319"/>
    </location>
</feature>
<feature type="helix" evidence="11">
    <location>
        <begin position="322"/>
        <end position="326"/>
    </location>
</feature>
<gene>
    <name type="primary">Tfb1m</name>
</gene>
<keyword id="KW-0002">3D-structure</keyword>
<keyword id="KW-0238">DNA-binding</keyword>
<keyword id="KW-0489">Methyltransferase</keyword>
<keyword id="KW-0496">Mitochondrion</keyword>
<keyword id="KW-1185">Reference proteome</keyword>
<keyword id="KW-0694">RNA-binding</keyword>
<keyword id="KW-0698">rRNA processing</keyword>
<keyword id="KW-0949">S-adenosyl-L-methionine</keyword>
<keyword id="KW-0804">Transcription</keyword>
<keyword id="KW-0805">Transcription regulation</keyword>
<keyword id="KW-0808">Transferase</keyword>
<keyword id="KW-0809">Transit peptide</keyword>
<accession>Q8JZM0</accession>
<comment type="function">
    <text evidence="1 4">Mitochondrial methyltransferase which uses S-adenosyl methionine to dimethylate two highly conserved adjacent adenosine residues (A1006 and A1007) within the loop of helix 45 at the 3-prime end of 12S rRNA, thereby regulating the assembly or stability of the small subunit of the mitochondrial ribosome (PubMed:19356719). Also required for basal transcription of mitochondrial DNA, probably via its interaction with POLRMT and TFAM. Stimulates transcription independently of the methyltransferase activity (By similarity).</text>
</comment>
<comment type="catalytic activity">
    <reaction evidence="4">
        <text>adenosine(N)/adenosine(N+1) in rRNA + 4 S-adenosyl-L-methionine = N(6)-dimethyladenosine(N)/N(6)-dimethyladenosine(N+1) in rRNA + 4 S-adenosyl-L-homocysteine + 4 H(+)</text>
        <dbReference type="Rhea" id="RHEA:78527"/>
        <dbReference type="Rhea" id="RHEA-COMP:19105"/>
        <dbReference type="Rhea" id="RHEA-COMP:19106"/>
        <dbReference type="ChEBI" id="CHEBI:15378"/>
        <dbReference type="ChEBI" id="CHEBI:57856"/>
        <dbReference type="ChEBI" id="CHEBI:59789"/>
        <dbReference type="ChEBI" id="CHEBI:74411"/>
        <dbReference type="ChEBI" id="CHEBI:74493"/>
    </reaction>
</comment>
<comment type="subunit">
    <text evidence="1 6">Interacts with mitochondrial RNA polymerase POLRMT. Interacts with TFAM (By similarity). Remains bound to the maturing mtSSU until the late stages of assembly (PubMed:35676484).</text>
</comment>
<comment type="subcellular location">
    <subcellularLocation>
        <location evidence="1">Mitochondrion</location>
    </subcellularLocation>
</comment>
<comment type="tissue specificity">
    <text evidence="3">Ubiquitously expressed.</text>
</comment>
<comment type="disruption phenotype">
    <text evidence="4">Mutant homozygous mice exhibit embryonic lethality. Conditional loss of Tfb1m in heart, leads to loss of dimethylation on adenosine(1006)/adenosine(1007) of 12S rRNA, decreases steady-state levels of 12S rRNA, induces instability of the small subunit of the ribosome and abolishes mitochondrial translation.</text>
</comment>
<comment type="similarity">
    <text evidence="7">Belongs to the class I-like SAM-binding methyltransferase superfamily. rRNA adenine N(6)-methyltransferase family. KsgA subfamily.</text>
</comment>
<dbReference type="EC" id="2.1.1.-" evidence="4"/>
<dbReference type="EMBL" id="AF508971">
    <property type="protein sequence ID" value="AAM33651.1"/>
    <property type="molecule type" value="mRNA"/>
</dbReference>
<dbReference type="EMBL" id="BC032930">
    <property type="protein sequence ID" value="AAH32930.1"/>
    <property type="molecule type" value="mRNA"/>
</dbReference>
<dbReference type="CCDS" id="CCDS28363.1"/>
<dbReference type="RefSeq" id="NP_666186.1">
    <property type="nucleotide sequence ID" value="NM_146074.3"/>
</dbReference>
<dbReference type="PDB" id="4GC5">
    <property type="method" value="X-ray"/>
    <property type="resolution" value="1.80 A"/>
    <property type="chains" value="A=1-345"/>
</dbReference>
<dbReference type="PDB" id="4GC9">
    <property type="method" value="X-ray"/>
    <property type="resolution" value="2.10 A"/>
    <property type="chains" value="A=1-345"/>
</dbReference>
<dbReference type="PDB" id="7PNT">
    <property type="method" value="EM"/>
    <property type="resolution" value="3.19 A"/>
    <property type="chains" value="c=1-345"/>
</dbReference>
<dbReference type="PDBsum" id="4GC5"/>
<dbReference type="PDBsum" id="4GC9"/>
<dbReference type="PDBsum" id="7PNT"/>
<dbReference type="EMDB" id="EMD-13551"/>
<dbReference type="SMR" id="Q8JZM0"/>
<dbReference type="BioGRID" id="230274">
    <property type="interactions" value="3"/>
</dbReference>
<dbReference type="FunCoup" id="Q8JZM0">
    <property type="interactions" value="883"/>
</dbReference>
<dbReference type="STRING" id="10090.ENSMUSP00000035291"/>
<dbReference type="iPTMnet" id="Q8JZM0"/>
<dbReference type="PhosphoSitePlus" id="Q8JZM0"/>
<dbReference type="SwissPalm" id="Q8JZM0"/>
<dbReference type="PaxDb" id="10090-ENSMUSP00000035291"/>
<dbReference type="PeptideAtlas" id="Q8JZM0"/>
<dbReference type="ProteomicsDB" id="259017"/>
<dbReference type="Pumba" id="Q8JZM0"/>
<dbReference type="Antibodypedia" id="33417">
    <property type="antibodies" value="206 antibodies from 27 providers"/>
</dbReference>
<dbReference type="DNASU" id="224481"/>
<dbReference type="Ensembl" id="ENSMUST00000041003.8">
    <property type="protein sequence ID" value="ENSMUSP00000035291.7"/>
    <property type="gene ID" value="ENSMUSG00000036983.8"/>
</dbReference>
<dbReference type="GeneID" id="224481"/>
<dbReference type="KEGG" id="mmu:224481"/>
<dbReference type="UCSC" id="uc008aes.1">
    <property type="organism name" value="mouse"/>
</dbReference>
<dbReference type="AGR" id="MGI:2146851"/>
<dbReference type="CTD" id="51106"/>
<dbReference type="MGI" id="MGI:2146851">
    <property type="gene designation" value="Tfb1m"/>
</dbReference>
<dbReference type="VEuPathDB" id="HostDB:ENSMUSG00000036983"/>
<dbReference type="eggNOG" id="KOG0821">
    <property type="taxonomic scope" value="Eukaryota"/>
</dbReference>
<dbReference type="GeneTree" id="ENSGT00950000183142"/>
<dbReference type="HOGENOM" id="CLU_041220_7_0_1"/>
<dbReference type="InParanoid" id="Q8JZM0"/>
<dbReference type="OMA" id="RIEQPFK"/>
<dbReference type="OrthoDB" id="16079at2759"/>
<dbReference type="PhylomeDB" id="Q8JZM0"/>
<dbReference type="TreeFam" id="TF300798"/>
<dbReference type="BioGRID-ORCS" id="224481">
    <property type="hits" value="21 hits in 78 CRISPR screens"/>
</dbReference>
<dbReference type="ChiTaRS" id="Tfb1m">
    <property type="organism name" value="mouse"/>
</dbReference>
<dbReference type="EvolutionaryTrace" id="Q8JZM0"/>
<dbReference type="PRO" id="PR:Q8JZM0"/>
<dbReference type="Proteomes" id="UP000000589">
    <property type="component" value="Chromosome 17"/>
</dbReference>
<dbReference type="RNAct" id="Q8JZM0">
    <property type="molecule type" value="protein"/>
</dbReference>
<dbReference type="Bgee" id="ENSMUSG00000036983">
    <property type="expression patterns" value="Expressed in lumbar dorsal root ganglion and 247 other cell types or tissues"/>
</dbReference>
<dbReference type="GO" id="GO:0042645">
    <property type="term" value="C:mitochondrial nucleoid"/>
    <property type="evidence" value="ECO:0007669"/>
    <property type="project" value="Ensembl"/>
</dbReference>
<dbReference type="GO" id="GO:0005739">
    <property type="term" value="C:mitochondrion"/>
    <property type="evidence" value="ECO:0007005"/>
    <property type="project" value="MGI"/>
</dbReference>
<dbReference type="GO" id="GO:0003677">
    <property type="term" value="F:DNA binding"/>
    <property type="evidence" value="ECO:0007669"/>
    <property type="project" value="UniProtKB-KW"/>
</dbReference>
<dbReference type="GO" id="GO:0003723">
    <property type="term" value="F:RNA binding"/>
    <property type="evidence" value="ECO:0007669"/>
    <property type="project" value="UniProtKB-KW"/>
</dbReference>
<dbReference type="GO" id="GO:0000179">
    <property type="term" value="F:rRNA (adenine-N6,N6-)-dimethyltransferase activity"/>
    <property type="evidence" value="ECO:0000315"/>
    <property type="project" value="UniProtKB"/>
</dbReference>
<dbReference type="GO" id="GO:1904047">
    <property type="term" value="F:S-adenosyl-L-methionine binding"/>
    <property type="evidence" value="ECO:0000314"/>
    <property type="project" value="UniProtKB"/>
</dbReference>
<dbReference type="GO" id="GO:0031167">
    <property type="term" value="P:rRNA methylation"/>
    <property type="evidence" value="ECO:0000315"/>
    <property type="project" value="UniProtKB"/>
</dbReference>
<dbReference type="CDD" id="cd02440">
    <property type="entry name" value="AdoMet_MTases"/>
    <property type="match status" value="1"/>
</dbReference>
<dbReference type="FunFam" id="1.10.8.100:FF:000004">
    <property type="entry name" value="rRNA adenine N(6)-methyltransferase"/>
    <property type="match status" value="1"/>
</dbReference>
<dbReference type="FunFam" id="3.40.50.150:FF:000109">
    <property type="entry name" value="rRNA adenine N(6)-methyltransferase"/>
    <property type="match status" value="1"/>
</dbReference>
<dbReference type="Gene3D" id="1.10.8.100">
    <property type="entry name" value="Ribosomal RNA adenine dimethylase-like, domain 2"/>
    <property type="match status" value="1"/>
</dbReference>
<dbReference type="Gene3D" id="3.40.50.150">
    <property type="entry name" value="Vaccinia Virus protein VP39"/>
    <property type="match status" value="1"/>
</dbReference>
<dbReference type="HAMAP" id="MF_00607">
    <property type="entry name" value="16SrRNA_methyltr_A"/>
    <property type="match status" value="1"/>
</dbReference>
<dbReference type="InterPro" id="IPR001737">
    <property type="entry name" value="KsgA/Erm"/>
</dbReference>
<dbReference type="InterPro" id="IPR023165">
    <property type="entry name" value="rRNA_Ade_diMease-like_C"/>
</dbReference>
<dbReference type="InterPro" id="IPR020596">
    <property type="entry name" value="rRNA_Ade_Mease_Trfase_CS"/>
</dbReference>
<dbReference type="InterPro" id="IPR020598">
    <property type="entry name" value="rRNA_Ade_methylase_Trfase_N"/>
</dbReference>
<dbReference type="InterPro" id="IPR011530">
    <property type="entry name" value="rRNA_adenine_dimethylase"/>
</dbReference>
<dbReference type="InterPro" id="IPR029063">
    <property type="entry name" value="SAM-dependent_MTases_sf"/>
</dbReference>
<dbReference type="NCBIfam" id="TIGR00755">
    <property type="entry name" value="ksgA"/>
    <property type="match status" value="1"/>
</dbReference>
<dbReference type="PANTHER" id="PTHR11727">
    <property type="entry name" value="DIMETHYLADENOSINE TRANSFERASE"/>
    <property type="match status" value="1"/>
</dbReference>
<dbReference type="PANTHER" id="PTHR11727:SF17">
    <property type="entry name" value="DIMETHYLADENOSINE TRANSFERASE 1, MITOCHONDRIAL"/>
    <property type="match status" value="1"/>
</dbReference>
<dbReference type="Pfam" id="PF00398">
    <property type="entry name" value="RrnaAD"/>
    <property type="match status" value="1"/>
</dbReference>
<dbReference type="SMART" id="SM00650">
    <property type="entry name" value="rADc"/>
    <property type="match status" value="1"/>
</dbReference>
<dbReference type="SUPFAM" id="SSF53335">
    <property type="entry name" value="S-adenosyl-L-methionine-dependent methyltransferases"/>
    <property type="match status" value="1"/>
</dbReference>
<dbReference type="PROSITE" id="PS01131">
    <property type="entry name" value="RRNA_A_DIMETH"/>
    <property type="match status" value="1"/>
</dbReference>
<dbReference type="PROSITE" id="PS51689">
    <property type="entry name" value="SAM_RNA_A_N6_MT"/>
    <property type="match status" value="1"/>
</dbReference>
<proteinExistence type="evidence at protein level"/>
<sequence length="345" mass="38962">MAASGKLGTFRLPPLPTIREIIKLFGLRAVKQLSQNFLLDLRLTDKIVRKAGSLADVYVYEVGPGPGGITRSILNANVAELLVVEKDTRFIPGLQMLSDAAPGKLRIVHGDVLTYKIEKAFPGNIRRQWEDDPPNVHIIGNLPFSVSTPLIIKWLENISLKDGPFVYGRTKMTLTFQKEVAERLVATTGSKQHSRLSIMAQYLCNVEHLFTIPGKAFVPKPKVDVGVVHLTPLIEPKIKQPFKLVEKVVQNAFQFRRKYCHRGLGMLFPEAQRLESTGRLLQLADIDPTLRPTHLSLMHFKSLCDVYRKMCDEDPQLFTYNFREELKQKKSKGQEKDGDPESCGF</sequence>
<organism>
    <name type="scientific">Mus musculus</name>
    <name type="common">Mouse</name>
    <dbReference type="NCBI Taxonomy" id="10090"/>
    <lineage>
        <taxon>Eukaryota</taxon>
        <taxon>Metazoa</taxon>
        <taxon>Chordata</taxon>
        <taxon>Craniata</taxon>
        <taxon>Vertebrata</taxon>
        <taxon>Euteleostomi</taxon>
        <taxon>Mammalia</taxon>
        <taxon>Eutheria</taxon>
        <taxon>Euarchontoglires</taxon>
        <taxon>Glires</taxon>
        <taxon>Rodentia</taxon>
        <taxon>Myomorpha</taxon>
        <taxon>Muroidea</taxon>
        <taxon>Muridae</taxon>
        <taxon>Murinae</taxon>
        <taxon>Mus</taxon>
        <taxon>Mus</taxon>
    </lineage>
</organism>
<reference key="1">
    <citation type="journal article" date="2002" name="Nat. Genet.">
        <title>Mitochondrial transcription factors B1 and B2 activate transcription of human mtDNA.</title>
        <authorList>
            <person name="Falkenberg M."/>
            <person name="Gaspari M."/>
            <person name="Rantanen A."/>
            <person name="Trifunovic A."/>
            <person name="Larsson N.-G."/>
            <person name="Gustafsson C.M."/>
        </authorList>
    </citation>
    <scope>NUCLEOTIDE SEQUENCE [MRNA]</scope>
    <source>
        <strain>129</strain>
    </source>
</reference>
<reference key="2">
    <citation type="journal article" date="2004" name="Genome Res.">
        <title>The status, quality, and expansion of the NIH full-length cDNA project: the Mammalian Gene Collection (MGC).</title>
        <authorList>
            <consortium name="The MGC Project Team"/>
        </authorList>
    </citation>
    <scope>NUCLEOTIDE SEQUENCE [LARGE SCALE MRNA]</scope>
    <source>
        <tissue>Mammary gland</tissue>
    </source>
</reference>
<reference key="3">
    <citation type="journal article" date="2003" name="Mamm. Genome">
        <title>Characterization of the mouse genes for mitochondrial transcription factors B1 and B2.</title>
        <authorList>
            <person name="Rantanen A."/>
            <person name="Gaspari M."/>
            <person name="Falkenberg M."/>
            <person name="Gustafsson C.M."/>
            <person name="Larsson N.-G."/>
        </authorList>
    </citation>
    <scope>TISSUE SPECIFICITY</scope>
</reference>
<reference key="4">
    <citation type="journal article" date="2009" name="Cell Metab.">
        <title>Methylation of 12S rRNA is necessary for in vivo stability of the small subunit of the mammalian mitochondrial ribosome.</title>
        <authorList>
            <person name="Metodiev M.D."/>
            <person name="Lesko N."/>
            <person name="Park C.B."/>
            <person name="Camara Y."/>
            <person name="Shi Y."/>
            <person name="Wibom R."/>
            <person name="Hultenby K."/>
            <person name="Gustafsson C.M."/>
            <person name="Larsson N.G."/>
        </authorList>
    </citation>
    <scope>DISRUPTION PHENOTYPE</scope>
    <scope>FUNCTION</scope>
    <scope>CATALYTIC ACTIVITY</scope>
</reference>
<reference evidence="8 9" key="5">
    <citation type="journal article" date="2013" name="Nucleic Acids Res.">
        <title>Structural basis for S-adenosylmethionine binding and methyltransferase activity by mitochondrial transcription factor B1.</title>
        <authorList>
            <person name="Guja K.E."/>
            <person name="Venkataraman K."/>
            <person name="Yakubovskaya E."/>
            <person name="Shi H."/>
            <person name="Mejia E."/>
            <person name="Hambardjieva E."/>
            <person name="Karzai A.W."/>
            <person name="Garcia-Diaz M."/>
        </authorList>
    </citation>
    <scope>X-RAY CRYSTALLOGRAPHY (1.8 ANGSTROMS) IN COMPLEX WITH S-ADENOSYL-L-METHIONINE</scope>
</reference>
<reference evidence="10" key="6">
    <citation type="journal article" date="2022" name="Nature">
        <title>Mechanism of mitoribosomal small subunit biogenesis and preinitiation.</title>
        <authorList>
            <person name="Itoh Y."/>
            <person name="Khawaja A."/>
            <person name="Laptev I."/>
            <person name="Cipullo M."/>
            <person name="Atanassov I."/>
            <person name="Sergiev P."/>
            <person name="Rorbach J."/>
            <person name="Amunts A."/>
        </authorList>
    </citation>
    <scope>STRUCTURE BY ELECTRON MICROSCOPY (3.19 ANGSTROMS) IN COMPLEX WITH MITOCHONDRIAL RIBOSOME SMALL SUBUNIT</scope>
    <scope>SUBUNIT</scope>
</reference>
<protein>
    <recommendedName>
        <fullName>Dimethyladenosine transferase 1, mitochondrial</fullName>
        <ecNumber evidence="4">2.1.1.-</ecNumber>
    </recommendedName>
    <alternativeName>
        <fullName>Mitochondrial 12S rRNA dimethylase 1</fullName>
    </alternativeName>
    <alternativeName>
        <fullName>Mitochondrial transcription factor B1</fullName>
        <shortName>mtTFB1</shortName>
    </alternativeName>
    <alternativeName>
        <fullName>S-adenosylmethionine-6-N', N'-adenosyl(rRNA) dimethyltransferase 1</fullName>
    </alternativeName>
</protein>
<name>TFB1M_MOUSE</name>
<evidence type="ECO:0000250" key="1">
    <source>
        <dbReference type="UniProtKB" id="Q8WVM0"/>
    </source>
</evidence>
<evidence type="ECO:0000255" key="2"/>
<evidence type="ECO:0000269" key="3">
    <source>
    </source>
</evidence>
<evidence type="ECO:0000269" key="4">
    <source>
    </source>
</evidence>
<evidence type="ECO:0000269" key="5">
    <source>
    </source>
</evidence>
<evidence type="ECO:0000269" key="6">
    <source>
    </source>
</evidence>
<evidence type="ECO:0000305" key="7"/>
<evidence type="ECO:0007744" key="8">
    <source>
        <dbReference type="PDB" id="4GC5"/>
    </source>
</evidence>
<evidence type="ECO:0007744" key="9">
    <source>
        <dbReference type="PDB" id="4GC9"/>
    </source>
</evidence>
<evidence type="ECO:0007744" key="10">
    <source>
        <dbReference type="PDB" id="7PNT"/>
    </source>
</evidence>
<evidence type="ECO:0007829" key="11">
    <source>
        <dbReference type="PDB" id="4GC5"/>
    </source>
</evidence>